<sequence>MDKFTTLEGVAAPLKIINVDTDMIIPKQFLKTIKRTGLGKGLFSEQRYKDDGSENPDFILNKPAYRNAKILVAGDNFGCGSSREHAPWALLDFGIRCVISTSFGDIFYNNCFKNGVLPIRVTQADLDKLFDDAERGANATITIDLGKQEIRGPDGGTVKFDIDPFRKHCLMNGLDDIGLTLEKKASIDSYEDKAKTERAWA</sequence>
<comment type="function">
    <text evidence="1">Catalyzes the isomerization between 2-isopropylmalate and 3-isopropylmalate, via the formation of 2-isopropylmaleate.</text>
</comment>
<comment type="catalytic activity">
    <reaction evidence="1">
        <text>(2R,3S)-3-isopropylmalate = (2S)-2-isopropylmalate</text>
        <dbReference type="Rhea" id="RHEA:32287"/>
        <dbReference type="ChEBI" id="CHEBI:1178"/>
        <dbReference type="ChEBI" id="CHEBI:35121"/>
        <dbReference type="EC" id="4.2.1.33"/>
    </reaction>
</comment>
<comment type="pathway">
    <text evidence="1">Amino-acid biosynthesis; L-leucine biosynthesis; L-leucine from 3-methyl-2-oxobutanoate: step 2/4.</text>
</comment>
<comment type="subunit">
    <text evidence="1">Heterodimer of LeuC and LeuD.</text>
</comment>
<comment type="similarity">
    <text evidence="1">Belongs to the LeuD family. LeuD type 1 subfamily.</text>
</comment>
<organism>
    <name type="scientific">Rhodopseudomonas palustris (strain BisB18)</name>
    <dbReference type="NCBI Taxonomy" id="316056"/>
    <lineage>
        <taxon>Bacteria</taxon>
        <taxon>Pseudomonadati</taxon>
        <taxon>Pseudomonadota</taxon>
        <taxon>Alphaproteobacteria</taxon>
        <taxon>Hyphomicrobiales</taxon>
        <taxon>Nitrobacteraceae</taxon>
        <taxon>Rhodopseudomonas</taxon>
    </lineage>
</organism>
<reference key="1">
    <citation type="submission" date="2006-03" db="EMBL/GenBank/DDBJ databases">
        <title>Complete sequence of Rhodopseudomonas palustris BisB18.</title>
        <authorList>
            <consortium name="US DOE Joint Genome Institute"/>
            <person name="Copeland A."/>
            <person name="Lucas S."/>
            <person name="Lapidus A."/>
            <person name="Barry K."/>
            <person name="Detter J.C."/>
            <person name="Glavina del Rio T."/>
            <person name="Hammon N."/>
            <person name="Israni S."/>
            <person name="Dalin E."/>
            <person name="Tice H."/>
            <person name="Pitluck S."/>
            <person name="Chain P."/>
            <person name="Malfatti S."/>
            <person name="Shin M."/>
            <person name="Vergez L."/>
            <person name="Schmutz J."/>
            <person name="Larimer F."/>
            <person name="Land M."/>
            <person name="Hauser L."/>
            <person name="Pelletier D.A."/>
            <person name="Kyrpides N."/>
            <person name="Anderson I."/>
            <person name="Oda Y."/>
            <person name="Harwood C.S."/>
            <person name="Richardson P."/>
        </authorList>
    </citation>
    <scope>NUCLEOTIDE SEQUENCE [LARGE SCALE GENOMIC DNA]</scope>
    <source>
        <strain>BisB18</strain>
    </source>
</reference>
<name>LEUD_RHOPB</name>
<dbReference type="EC" id="4.2.1.33" evidence="1"/>
<dbReference type="EMBL" id="CP000301">
    <property type="protein sequence ID" value="ABD85805.1"/>
    <property type="molecule type" value="Genomic_DNA"/>
</dbReference>
<dbReference type="SMR" id="Q21CT1"/>
<dbReference type="STRING" id="316056.RPC_0230"/>
<dbReference type="KEGG" id="rpc:RPC_0230"/>
<dbReference type="eggNOG" id="COG0066">
    <property type="taxonomic scope" value="Bacteria"/>
</dbReference>
<dbReference type="HOGENOM" id="CLU_081378_0_3_5"/>
<dbReference type="OrthoDB" id="9777465at2"/>
<dbReference type="UniPathway" id="UPA00048">
    <property type="reaction ID" value="UER00071"/>
</dbReference>
<dbReference type="GO" id="GO:0009316">
    <property type="term" value="C:3-isopropylmalate dehydratase complex"/>
    <property type="evidence" value="ECO:0007669"/>
    <property type="project" value="InterPro"/>
</dbReference>
<dbReference type="GO" id="GO:0003861">
    <property type="term" value="F:3-isopropylmalate dehydratase activity"/>
    <property type="evidence" value="ECO:0007669"/>
    <property type="project" value="UniProtKB-UniRule"/>
</dbReference>
<dbReference type="GO" id="GO:0009098">
    <property type="term" value="P:L-leucine biosynthetic process"/>
    <property type="evidence" value="ECO:0007669"/>
    <property type="project" value="UniProtKB-UniRule"/>
</dbReference>
<dbReference type="CDD" id="cd01577">
    <property type="entry name" value="IPMI_Swivel"/>
    <property type="match status" value="1"/>
</dbReference>
<dbReference type="FunFam" id="3.20.19.10:FF:000003">
    <property type="entry name" value="3-isopropylmalate dehydratase small subunit"/>
    <property type="match status" value="1"/>
</dbReference>
<dbReference type="Gene3D" id="3.20.19.10">
    <property type="entry name" value="Aconitase, domain 4"/>
    <property type="match status" value="1"/>
</dbReference>
<dbReference type="HAMAP" id="MF_01031">
    <property type="entry name" value="LeuD_type1"/>
    <property type="match status" value="1"/>
</dbReference>
<dbReference type="InterPro" id="IPR004431">
    <property type="entry name" value="3-IsopropMal_deHydase_ssu"/>
</dbReference>
<dbReference type="InterPro" id="IPR015928">
    <property type="entry name" value="Aconitase/3IPM_dehydase_swvl"/>
</dbReference>
<dbReference type="InterPro" id="IPR000573">
    <property type="entry name" value="AconitaseA/IPMdHydase_ssu_swvl"/>
</dbReference>
<dbReference type="InterPro" id="IPR033940">
    <property type="entry name" value="IPMI_Swivel"/>
</dbReference>
<dbReference type="InterPro" id="IPR050075">
    <property type="entry name" value="LeuD"/>
</dbReference>
<dbReference type="NCBIfam" id="TIGR00171">
    <property type="entry name" value="leuD"/>
    <property type="match status" value="1"/>
</dbReference>
<dbReference type="NCBIfam" id="NF002458">
    <property type="entry name" value="PRK01641.1"/>
    <property type="match status" value="1"/>
</dbReference>
<dbReference type="PANTHER" id="PTHR43345:SF5">
    <property type="entry name" value="3-ISOPROPYLMALATE DEHYDRATASE SMALL SUBUNIT"/>
    <property type="match status" value="1"/>
</dbReference>
<dbReference type="PANTHER" id="PTHR43345">
    <property type="entry name" value="3-ISOPROPYLMALATE DEHYDRATASE SMALL SUBUNIT 2-RELATED-RELATED"/>
    <property type="match status" value="1"/>
</dbReference>
<dbReference type="Pfam" id="PF00694">
    <property type="entry name" value="Aconitase_C"/>
    <property type="match status" value="1"/>
</dbReference>
<dbReference type="SUPFAM" id="SSF52016">
    <property type="entry name" value="LeuD/IlvD-like"/>
    <property type="match status" value="1"/>
</dbReference>
<evidence type="ECO:0000255" key="1">
    <source>
        <dbReference type="HAMAP-Rule" id="MF_01031"/>
    </source>
</evidence>
<proteinExistence type="inferred from homology"/>
<gene>
    <name evidence="1" type="primary">leuD</name>
    <name type="ordered locus">RPC_0230</name>
</gene>
<accession>Q21CT1</accession>
<keyword id="KW-0028">Amino-acid biosynthesis</keyword>
<keyword id="KW-0100">Branched-chain amino acid biosynthesis</keyword>
<keyword id="KW-0432">Leucine biosynthesis</keyword>
<keyword id="KW-0456">Lyase</keyword>
<protein>
    <recommendedName>
        <fullName evidence="1">3-isopropylmalate dehydratase small subunit</fullName>
        <ecNumber evidence="1">4.2.1.33</ecNumber>
    </recommendedName>
    <alternativeName>
        <fullName evidence="1">Alpha-IPM isomerase</fullName>
        <shortName evidence="1">IPMI</shortName>
    </alternativeName>
    <alternativeName>
        <fullName evidence="1">Isopropylmalate isomerase</fullName>
    </alternativeName>
</protein>
<feature type="chain" id="PRO_1000063817" description="3-isopropylmalate dehydratase small subunit">
    <location>
        <begin position="1"/>
        <end position="201"/>
    </location>
</feature>